<sequence length="457" mass="52770">MGLVEVVWWWRWRFGGGGGGLVVEVEVWWWRWRFGGGGCIMLEIEEERSQCPAEITEDNQTSGCRRQWDNITCWPEAQVGAVVVKPCPKYFRLLTTFLGNVSRNCTSQGWTDVYPAPYAVACGYDSTAHQGKEQTAFYGTVKTGYTIGHTLSLIALTAAMIILCLFRKLHCTRNYIHMHLFMSFIMRAIAVFIKDVTLFESGEPEHCFVSSVGCKAMMVFFQYCVMANFFWLLVEGLYLHTLLVISFFSERKYFWWYILIGWGAPSVFITAWTVVRIYFFNVGCWEEIIESPIWWIIKTPILVSILVNFILFICIIRILVQKLHSPDVGHNETSQYSRLAKSTLLLIPLFGIHYIMFAFFPDNFKAQVKLVFELVVGSFQGFVVAVLYCFLNGEVQAELKRKWRRWHLERFLGSDMKYHHPSLGSNGTNFSTQISMLTKCSPKTRRCSSFQAEFSLV</sequence>
<keyword id="KW-1003">Cell membrane</keyword>
<keyword id="KW-1015">Disulfide bond</keyword>
<keyword id="KW-0297">G-protein coupled receptor</keyword>
<keyword id="KW-0325">Glycoprotein</keyword>
<keyword id="KW-0472">Membrane</keyword>
<keyword id="KW-0675">Receptor</keyword>
<keyword id="KW-1185">Reference proteome</keyword>
<keyword id="KW-0732">Signal</keyword>
<keyword id="KW-0807">Transducer</keyword>
<keyword id="KW-0812">Transmembrane</keyword>
<keyword id="KW-1133">Transmembrane helix</keyword>
<proteinExistence type="evidence at transcript level"/>
<feature type="signal peptide" evidence="2">
    <location>
        <begin position="1"/>
        <end position="19"/>
    </location>
</feature>
<feature type="chain" id="PRO_0000012859" description="Vasoactive intestinal polypeptide receptor">
    <location>
        <begin position="20"/>
        <end position="457"/>
    </location>
</feature>
<feature type="topological domain" description="Extracellular" evidence="2">
    <location>
        <begin position="20"/>
        <end position="141"/>
    </location>
</feature>
<feature type="transmembrane region" description="Helical; Name=1" evidence="2">
    <location>
        <begin position="142"/>
        <end position="166"/>
    </location>
</feature>
<feature type="topological domain" description="Cytoplasmic" evidence="2">
    <location>
        <begin position="167"/>
        <end position="173"/>
    </location>
</feature>
<feature type="transmembrane region" description="Helical; Name=2" evidence="2">
    <location>
        <begin position="174"/>
        <end position="193"/>
    </location>
</feature>
<feature type="topological domain" description="Extracellular" evidence="2">
    <location>
        <begin position="194"/>
        <end position="215"/>
    </location>
</feature>
<feature type="transmembrane region" description="Helical; Name=3" evidence="2">
    <location>
        <begin position="216"/>
        <end position="239"/>
    </location>
</feature>
<feature type="topological domain" description="Cytoplasmic" evidence="2">
    <location>
        <begin position="240"/>
        <end position="253"/>
    </location>
</feature>
<feature type="transmembrane region" description="Helical; Name=4" evidence="2">
    <location>
        <begin position="254"/>
        <end position="275"/>
    </location>
</feature>
<feature type="topological domain" description="Extracellular" evidence="2">
    <location>
        <begin position="276"/>
        <end position="292"/>
    </location>
</feature>
<feature type="transmembrane region" description="Helical; Name=5" evidence="2">
    <location>
        <begin position="293"/>
        <end position="316"/>
    </location>
</feature>
<feature type="topological domain" description="Cytoplasmic" evidence="2">
    <location>
        <begin position="317"/>
        <end position="341"/>
    </location>
</feature>
<feature type="transmembrane region" description="Helical; Name=6" evidence="2">
    <location>
        <begin position="342"/>
        <end position="361"/>
    </location>
</feature>
<feature type="topological domain" description="Extracellular" evidence="2">
    <location>
        <begin position="362"/>
        <end position="373"/>
    </location>
</feature>
<feature type="transmembrane region" description="Helical; Name=7" evidence="2">
    <location>
        <begin position="374"/>
        <end position="393"/>
    </location>
</feature>
<feature type="topological domain" description="Cytoplasmic" evidence="2">
    <location>
        <begin position="394"/>
        <end position="457"/>
    </location>
</feature>
<feature type="glycosylation site" description="N-linked (GlcNAc...) asparagine" evidence="2">
    <location>
        <position position="59"/>
    </location>
</feature>
<feature type="glycosylation site" description="N-linked (GlcNAc...) asparagine" evidence="2">
    <location>
        <position position="70"/>
    </location>
</feature>
<feature type="glycosylation site" description="N-linked (GlcNAc...) asparagine" evidence="2">
    <location>
        <position position="100"/>
    </location>
</feature>
<feature type="glycosylation site" description="N-linked (GlcNAc...) asparagine" evidence="2">
    <location>
        <position position="104"/>
    </location>
</feature>
<feature type="disulfide bond" evidence="1">
    <location>
        <begin position="51"/>
        <end position="73"/>
    </location>
</feature>
<feature type="disulfide bond" evidence="1">
    <location>
        <begin position="64"/>
        <end position="105"/>
    </location>
</feature>
<feature type="disulfide bond" evidence="1">
    <location>
        <begin position="87"/>
        <end position="122"/>
    </location>
</feature>
<feature type="disulfide bond" evidence="1">
    <location>
        <begin position="214"/>
        <end position="284"/>
    </location>
</feature>
<reference key="1">
    <citation type="journal article" date="2001" name="Gen. Comp. Endocrinol.">
        <title>Molecular cloning and expression analysis of the turkey vasoactive intestinal peptide receptor.</title>
        <authorList>
            <person name="You S."/>
            <person name="Hsu C.-C."/>
            <person name="Kim H."/>
            <person name="Kho Y."/>
            <person name="Choi Y.J."/>
            <person name="el Halawani M.E."/>
            <person name="Farris J."/>
            <person name="Foster D.N."/>
        </authorList>
    </citation>
    <scope>NUCLEOTIDE SEQUENCE [MRNA]</scope>
    <scope>TISSUE SPECIFICITY</scope>
    <scope>DEVELOPMENTAL STAGE</scope>
    <scope>INDUCTION</scope>
    <source>
        <tissue>Pituitary</tissue>
        <tissue>Small intestine</tissue>
    </source>
</reference>
<reference key="2">
    <citation type="journal article" date="1996" name="Proc. Soc. Exp. Biol. Med.">
        <title>Vasoactive intestinal peptide stimulates prolactin mRNA expression in turkey pituitary cells: effects of dopaminergic drugs.</title>
        <authorList>
            <person name="Xu M."/>
            <person name="Proudman J.A."/>
            <person name="Pitts G.R."/>
            <person name="Wong E.A."/>
            <person name="Foster D.N."/>
            <person name="el Halawani M.E."/>
        </authorList>
    </citation>
    <scope>NUCLEOTIDE SEQUENCE [MRNA] OF 198-457</scope>
    <source>
        <tissue>Small intestine</tissue>
    </source>
</reference>
<accession>Q91085</accession>
<organism>
    <name type="scientific">Meleagris gallopavo</name>
    <name type="common">Wild turkey</name>
    <dbReference type="NCBI Taxonomy" id="9103"/>
    <lineage>
        <taxon>Eukaryota</taxon>
        <taxon>Metazoa</taxon>
        <taxon>Chordata</taxon>
        <taxon>Craniata</taxon>
        <taxon>Vertebrata</taxon>
        <taxon>Euteleostomi</taxon>
        <taxon>Archelosauria</taxon>
        <taxon>Archosauria</taxon>
        <taxon>Dinosauria</taxon>
        <taxon>Saurischia</taxon>
        <taxon>Theropoda</taxon>
        <taxon>Coelurosauria</taxon>
        <taxon>Aves</taxon>
        <taxon>Neognathae</taxon>
        <taxon>Galloanserae</taxon>
        <taxon>Galliformes</taxon>
        <taxon>Phasianidae</taxon>
        <taxon>Meleagridinae</taxon>
        <taxon>Meleagris</taxon>
    </lineage>
</organism>
<gene>
    <name type="primary">VIPR1</name>
</gene>
<protein>
    <recommendedName>
        <fullName>Vasoactive intestinal polypeptide receptor</fullName>
        <shortName>VIP receptor</shortName>
        <shortName>VIP-R</shortName>
    </recommendedName>
</protein>
<name>VIPR_MELGA</name>
<dbReference type="EMBL" id="U31991">
    <property type="protein sequence ID" value="AAA99740.2"/>
    <property type="molecule type" value="mRNA"/>
</dbReference>
<dbReference type="RefSeq" id="NP_001290107.1">
    <property type="nucleotide sequence ID" value="NM_001303178.1"/>
</dbReference>
<dbReference type="SMR" id="Q91085"/>
<dbReference type="GlyCosmos" id="Q91085">
    <property type="glycosylation" value="4 sites, No reported glycans"/>
</dbReference>
<dbReference type="GeneID" id="100303683"/>
<dbReference type="KEGG" id="mgp:100303683"/>
<dbReference type="InParanoid" id="Q91085"/>
<dbReference type="OrthoDB" id="2052at1549675"/>
<dbReference type="Proteomes" id="UP000001645">
    <property type="component" value="Unplaced"/>
</dbReference>
<dbReference type="GO" id="GO:0005886">
    <property type="term" value="C:plasma membrane"/>
    <property type="evidence" value="ECO:0007669"/>
    <property type="project" value="UniProtKB-SubCell"/>
</dbReference>
<dbReference type="GO" id="GO:0008528">
    <property type="term" value="F:G protein-coupled peptide receptor activity"/>
    <property type="evidence" value="ECO:0007669"/>
    <property type="project" value="TreeGrafter"/>
</dbReference>
<dbReference type="GO" id="GO:0017046">
    <property type="term" value="F:peptide hormone binding"/>
    <property type="evidence" value="ECO:0007669"/>
    <property type="project" value="TreeGrafter"/>
</dbReference>
<dbReference type="GO" id="GO:0004999">
    <property type="term" value="F:vasoactive intestinal polypeptide receptor activity"/>
    <property type="evidence" value="ECO:0007669"/>
    <property type="project" value="InterPro"/>
</dbReference>
<dbReference type="GO" id="GO:0007188">
    <property type="term" value="P:adenylate cyclase-modulating G protein-coupled receptor signaling pathway"/>
    <property type="evidence" value="ECO:0007669"/>
    <property type="project" value="TreeGrafter"/>
</dbReference>
<dbReference type="GO" id="GO:0007166">
    <property type="term" value="P:cell surface receptor signaling pathway"/>
    <property type="evidence" value="ECO:0007669"/>
    <property type="project" value="InterPro"/>
</dbReference>
<dbReference type="CDD" id="cd15269">
    <property type="entry name" value="7tmB1_VIP-R1"/>
    <property type="match status" value="1"/>
</dbReference>
<dbReference type="FunFam" id="4.10.1240.10:FF:000030">
    <property type="entry name" value="Vasoactive intestinal polypeptide receptor"/>
    <property type="match status" value="1"/>
</dbReference>
<dbReference type="FunFam" id="1.20.1070.10:FF:000032">
    <property type="entry name" value="Vasoactive intestinal polypeptide receptor 1"/>
    <property type="match status" value="1"/>
</dbReference>
<dbReference type="Gene3D" id="4.10.1240.10">
    <property type="entry name" value="GPCR, family 2, extracellular hormone receptor domain"/>
    <property type="match status" value="1"/>
</dbReference>
<dbReference type="Gene3D" id="1.20.1070.10">
    <property type="entry name" value="Rhodopsin 7-helix transmembrane proteins"/>
    <property type="match status" value="1"/>
</dbReference>
<dbReference type="InterPro" id="IPR050332">
    <property type="entry name" value="GPCR_2"/>
</dbReference>
<dbReference type="InterPro" id="IPR017981">
    <property type="entry name" value="GPCR_2-like_7TM"/>
</dbReference>
<dbReference type="InterPro" id="IPR036445">
    <property type="entry name" value="GPCR_2_extracell_dom_sf"/>
</dbReference>
<dbReference type="InterPro" id="IPR001879">
    <property type="entry name" value="GPCR_2_extracellular_dom"/>
</dbReference>
<dbReference type="InterPro" id="IPR000832">
    <property type="entry name" value="GPCR_2_secretin-like"/>
</dbReference>
<dbReference type="InterPro" id="IPR017983">
    <property type="entry name" value="GPCR_2_secretin-like_CS"/>
</dbReference>
<dbReference type="InterPro" id="IPR001571">
    <property type="entry name" value="GPCR_2_VIP_rcpt"/>
</dbReference>
<dbReference type="InterPro" id="IPR001771">
    <property type="entry name" value="GPCR_2_VIP_rcpt_1"/>
</dbReference>
<dbReference type="PANTHER" id="PTHR45620">
    <property type="entry name" value="PDF RECEPTOR-LIKE PROTEIN-RELATED"/>
    <property type="match status" value="1"/>
</dbReference>
<dbReference type="PANTHER" id="PTHR45620:SF24">
    <property type="entry name" value="VASOACTIVE INTESTINAL POLYPEPTIDE RECEPTOR 1"/>
    <property type="match status" value="1"/>
</dbReference>
<dbReference type="Pfam" id="PF00002">
    <property type="entry name" value="7tm_2"/>
    <property type="match status" value="1"/>
</dbReference>
<dbReference type="Pfam" id="PF02793">
    <property type="entry name" value="HRM"/>
    <property type="match status" value="1"/>
</dbReference>
<dbReference type="PRINTS" id="PR00249">
    <property type="entry name" value="GPCRSECRETIN"/>
</dbReference>
<dbReference type="PRINTS" id="PR00491">
    <property type="entry name" value="VASOACTVEIPR"/>
</dbReference>
<dbReference type="PRINTS" id="PR01154">
    <property type="entry name" value="VIP1RECEPTOR"/>
</dbReference>
<dbReference type="SMART" id="SM00008">
    <property type="entry name" value="HormR"/>
    <property type="match status" value="1"/>
</dbReference>
<dbReference type="SUPFAM" id="SSF81321">
    <property type="entry name" value="Family A G protein-coupled receptor-like"/>
    <property type="match status" value="1"/>
</dbReference>
<dbReference type="SUPFAM" id="SSF111418">
    <property type="entry name" value="Hormone receptor domain"/>
    <property type="match status" value="1"/>
</dbReference>
<dbReference type="PROSITE" id="PS00649">
    <property type="entry name" value="G_PROTEIN_RECEP_F2_1"/>
    <property type="match status" value="1"/>
</dbReference>
<dbReference type="PROSITE" id="PS00650">
    <property type="entry name" value="G_PROTEIN_RECEP_F2_2"/>
    <property type="match status" value="1"/>
</dbReference>
<dbReference type="PROSITE" id="PS50227">
    <property type="entry name" value="G_PROTEIN_RECEP_F2_3"/>
    <property type="match status" value="1"/>
</dbReference>
<dbReference type="PROSITE" id="PS50261">
    <property type="entry name" value="G_PROTEIN_RECEP_F2_4"/>
    <property type="match status" value="1"/>
</dbReference>
<evidence type="ECO:0000250" key="1"/>
<evidence type="ECO:0000255" key="2"/>
<evidence type="ECO:0000269" key="3">
    <source>
    </source>
</evidence>
<evidence type="ECO:0000305" key="4"/>
<comment type="function">
    <text>This is a receptor for VIP. The activity of this receptor is mediated by G proteins which activate adenylyl cyclase.</text>
</comment>
<comment type="subcellular location">
    <subcellularLocation>
        <location>Cell membrane</location>
        <topology>Multi-pass membrane protein</topology>
    </subcellularLocation>
</comment>
<comment type="tissue specificity">
    <text evidence="3">Expressed in pituitary, hypothalamus, small intestine and ovarian follicles.</text>
</comment>
<comment type="developmental stage">
    <text evidence="3">Pituitary levels are highest in non-photostimulated and incubating birds and lower in photostimulated, laying and photorefractory birds.</text>
</comment>
<comment type="induction">
    <text evidence="3">Pituitary levels decrease on VIP immunization.</text>
</comment>
<comment type="similarity">
    <text evidence="4">Belongs to the G-protein coupled receptor 2 family.</text>
</comment>